<reference key="1">
    <citation type="submission" date="2007-11" db="EMBL/GenBank/DDBJ databases">
        <title>Complete genome sequence of Clostridium phytofermentans ISDg.</title>
        <authorList>
            <person name="Leschine S.B."/>
            <person name="Warnick T.A."/>
            <person name="Blanchard J.L."/>
            <person name="Schnell D.J."/>
            <person name="Petit E.L."/>
            <person name="LaTouf W.G."/>
            <person name="Copeland A."/>
            <person name="Lucas S."/>
            <person name="Lapidus A."/>
            <person name="Barry K."/>
            <person name="Glavina del Rio T."/>
            <person name="Dalin E."/>
            <person name="Tice H."/>
            <person name="Pitluck S."/>
            <person name="Kiss H."/>
            <person name="Brettin T."/>
            <person name="Bruce D."/>
            <person name="Detter J.C."/>
            <person name="Han C."/>
            <person name="Kuske C."/>
            <person name="Schmutz J."/>
            <person name="Larimer F."/>
            <person name="Land M."/>
            <person name="Hauser L."/>
            <person name="Kyrpides N."/>
            <person name="Kim E.A."/>
            <person name="Richardson P."/>
        </authorList>
    </citation>
    <scope>NUCLEOTIDE SEQUENCE [LARGE SCALE GENOMIC DNA]</scope>
    <source>
        <strain>ATCC 700394 / DSM 18823 / ISDg</strain>
    </source>
</reference>
<keyword id="KW-0963">Cytoplasm</keyword>
<keyword id="KW-0671">Queuosine biosynthesis</keyword>
<keyword id="KW-1185">Reference proteome</keyword>
<keyword id="KW-0949">S-adenosyl-L-methionine</keyword>
<keyword id="KW-0808">Transferase</keyword>
<accession>A9KK69</accession>
<name>QUEA_LACP7</name>
<dbReference type="EC" id="2.4.99.17" evidence="1"/>
<dbReference type="EMBL" id="CP000885">
    <property type="protein sequence ID" value="ABX42641.1"/>
    <property type="molecule type" value="Genomic_DNA"/>
</dbReference>
<dbReference type="RefSeq" id="WP_012200295.1">
    <property type="nucleotide sequence ID" value="NC_010001.1"/>
</dbReference>
<dbReference type="SMR" id="A9KK69"/>
<dbReference type="STRING" id="357809.Cphy_2280"/>
<dbReference type="KEGG" id="cpy:Cphy_2280"/>
<dbReference type="eggNOG" id="COG0809">
    <property type="taxonomic scope" value="Bacteria"/>
</dbReference>
<dbReference type="HOGENOM" id="CLU_039110_1_0_9"/>
<dbReference type="OrthoDB" id="9805933at2"/>
<dbReference type="UniPathway" id="UPA00392"/>
<dbReference type="Proteomes" id="UP000000370">
    <property type="component" value="Chromosome"/>
</dbReference>
<dbReference type="GO" id="GO:0005737">
    <property type="term" value="C:cytoplasm"/>
    <property type="evidence" value="ECO:0007669"/>
    <property type="project" value="UniProtKB-SubCell"/>
</dbReference>
<dbReference type="GO" id="GO:0051075">
    <property type="term" value="F:S-adenosylmethionine:tRNA ribosyltransferase-isomerase activity"/>
    <property type="evidence" value="ECO:0007669"/>
    <property type="project" value="UniProtKB-EC"/>
</dbReference>
<dbReference type="GO" id="GO:0008616">
    <property type="term" value="P:queuosine biosynthetic process"/>
    <property type="evidence" value="ECO:0007669"/>
    <property type="project" value="UniProtKB-UniRule"/>
</dbReference>
<dbReference type="GO" id="GO:0002099">
    <property type="term" value="P:tRNA wobble guanine modification"/>
    <property type="evidence" value="ECO:0007669"/>
    <property type="project" value="TreeGrafter"/>
</dbReference>
<dbReference type="FunFam" id="2.40.10.240:FF:000002">
    <property type="entry name" value="S-adenosylmethionine:tRNA ribosyltransferase-isomerase"/>
    <property type="match status" value="1"/>
</dbReference>
<dbReference type="FunFam" id="3.40.1780.10:FF:000001">
    <property type="entry name" value="S-adenosylmethionine:tRNA ribosyltransferase-isomerase"/>
    <property type="match status" value="1"/>
</dbReference>
<dbReference type="Gene3D" id="2.40.10.240">
    <property type="entry name" value="QueA-like"/>
    <property type="match status" value="1"/>
</dbReference>
<dbReference type="Gene3D" id="3.40.1780.10">
    <property type="entry name" value="QueA-like"/>
    <property type="match status" value="1"/>
</dbReference>
<dbReference type="HAMAP" id="MF_00113">
    <property type="entry name" value="QueA"/>
    <property type="match status" value="1"/>
</dbReference>
<dbReference type="InterPro" id="IPR003699">
    <property type="entry name" value="QueA"/>
</dbReference>
<dbReference type="InterPro" id="IPR042118">
    <property type="entry name" value="QueA_dom1"/>
</dbReference>
<dbReference type="InterPro" id="IPR042119">
    <property type="entry name" value="QueA_dom2"/>
</dbReference>
<dbReference type="InterPro" id="IPR036100">
    <property type="entry name" value="QueA_sf"/>
</dbReference>
<dbReference type="NCBIfam" id="NF001140">
    <property type="entry name" value="PRK00147.1"/>
    <property type="match status" value="1"/>
</dbReference>
<dbReference type="NCBIfam" id="TIGR00113">
    <property type="entry name" value="queA"/>
    <property type="match status" value="1"/>
</dbReference>
<dbReference type="PANTHER" id="PTHR30307">
    <property type="entry name" value="S-ADENOSYLMETHIONINE:TRNA RIBOSYLTRANSFERASE-ISOMERASE"/>
    <property type="match status" value="1"/>
</dbReference>
<dbReference type="PANTHER" id="PTHR30307:SF0">
    <property type="entry name" value="S-ADENOSYLMETHIONINE:TRNA RIBOSYLTRANSFERASE-ISOMERASE"/>
    <property type="match status" value="1"/>
</dbReference>
<dbReference type="Pfam" id="PF02547">
    <property type="entry name" value="Queuosine_synth"/>
    <property type="match status" value="1"/>
</dbReference>
<dbReference type="SUPFAM" id="SSF111337">
    <property type="entry name" value="QueA-like"/>
    <property type="match status" value="1"/>
</dbReference>
<gene>
    <name evidence="1" type="primary">queA</name>
    <name type="ordered locus">Cphy_2280</name>
</gene>
<comment type="function">
    <text evidence="1">Transfers and isomerizes the ribose moiety from AdoMet to the 7-aminomethyl group of 7-deazaguanine (preQ1-tRNA) to give epoxyqueuosine (oQ-tRNA).</text>
</comment>
<comment type="catalytic activity">
    <reaction evidence="1">
        <text>7-aminomethyl-7-carbaguanosine(34) in tRNA + S-adenosyl-L-methionine = epoxyqueuosine(34) in tRNA + adenine + L-methionine + 2 H(+)</text>
        <dbReference type="Rhea" id="RHEA:32155"/>
        <dbReference type="Rhea" id="RHEA-COMP:10342"/>
        <dbReference type="Rhea" id="RHEA-COMP:18582"/>
        <dbReference type="ChEBI" id="CHEBI:15378"/>
        <dbReference type="ChEBI" id="CHEBI:16708"/>
        <dbReference type="ChEBI" id="CHEBI:57844"/>
        <dbReference type="ChEBI" id="CHEBI:59789"/>
        <dbReference type="ChEBI" id="CHEBI:82833"/>
        <dbReference type="ChEBI" id="CHEBI:194443"/>
        <dbReference type="EC" id="2.4.99.17"/>
    </reaction>
</comment>
<comment type="pathway">
    <text evidence="1">tRNA modification; tRNA-queuosine biosynthesis.</text>
</comment>
<comment type="subunit">
    <text evidence="1">Monomer.</text>
</comment>
<comment type="subcellular location">
    <subcellularLocation>
        <location evidence="1">Cytoplasm</location>
    </subcellularLocation>
</comment>
<comment type="similarity">
    <text evidence="1">Belongs to the QueA family.</text>
</comment>
<proteinExistence type="inferred from homology"/>
<feature type="chain" id="PRO_1000075998" description="S-adenosylmethionine:tRNA ribosyltransferase-isomerase">
    <location>
        <begin position="1"/>
        <end position="364"/>
    </location>
</feature>
<protein>
    <recommendedName>
        <fullName evidence="1">S-adenosylmethionine:tRNA ribosyltransferase-isomerase</fullName>
        <ecNumber evidence="1">2.4.99.17</ecNumber>
    </recommendedName>
    <alternativeName>
        <fullName evidence="1">Queuosine biosynthesis protein QueA</fullName>
    </alternativeName>
</protein>
<organism>
    <name type="scientific">Lachnoclostridium phytofermentans (strain ATCC 700394 / DSM 18823 / ISDg)</name>
    <name type="common">Clostridium phytofermentans</name>
    <dbReference type="NCBI Taxonomy" id="357809"/>
    <lineage>
        <taxon>Bacteria</taxon>
        <taxon>Bacillati</taxon>
        <taxon>Bacillota</taxon>
        <taxon>Clostridia</taxon>
        <taxon>Lachnospirales</taxon>
        <taxon>Lachnospiraceae</taxon>
    </lineage>
</organism>
<sequence>MKKQDFYFDLPEELIAQDPLEDRSGSRLLVLDKNTGKVTHHIFKEIVKYLKKGDCLVLNNTKVIPARLMGERIIEKTPLAPGHSYGKEGTPIELLLLKRKPDDVWETLVRPGKKAKVGTKISFGDGKLIGEIIDVVEEGNRLVKFTYQGIFEEILDELGQMPLPPYITHELADKNRYQTVYAKHEGSAAAPTAGLHFTNELLKQIEDMGVVIANVTLHVGLGTFRPVKEDDILDHHMHSEVYQVEESEAKKINDAKRAGGRIICVGTTSCRTIESAANEDGFVQAKSGATEIFIYPGYKFKVLNCLITNFHLPESTLLMLVSALASREHIIAAYEEAVKERYRFFSFGDAMFITDNIIETKDTF</sequence>
<evidence type="ECO:0000255" key="1">
    <source>
        <dbReference type="HAMAP-Rule" id="MF_00113"/>
    </source>
</evidence>